<feature type="chain" id="PRO_0000357249" description="Methylthioribose-1-phosphate isomerase">
    <location>
        <begin position="1"/>
        <end position="346"/>
    </location>
</feature>
<feature type="active site" description="Proton donor" evidence="1">
    <location>
        <position position="241"/>
    </location>
</feature>
<feature type="binding site" evidence="1">
    <location>
        <begin position="48"/>
        <end position="50"/>
    </location>
    <ligand>
        <name>substrate</name>
    </ligand>
</feature>
<feature type="binding site" evidence="1">
    <location>
        <position position="91"/>
    </location>
    <ligand>
        <name>substrate</name>
    </ligand>
</feature>
<feature type="binding site" evidence="1">
    <location>
        <position position="200"/>
    </location>
    <ligand>
        <name>substrate</name>
    </ligand>
</feature>
<feature type="binding site" evidence="1">
    <location>
        <begin position="251"/>
        <end position="252"/>
    </location>
    <ligand>
        <name>substrate</name>
    </ligand>
</feature>
<feature type="site" description="Transition state stabilizer" evidence="1">
    <location>
        <position position="161"/>
    </location>
</feature>
<gene>
    <name evidence="1" type="primary">mtnA</name>
    <name type="ordered locus">SYNPCC7002_A2308</name>
</gene>
<reference key="1">
    <citation type="submission" date="2008-02" db="EMBL/GenBank/DDBJ databases">
        <title>Complete sequence of Synechococcus sp. PCC 7002.</title>
        <authorList>
            <person name="Li T."/>
            <person name="Zhao J."/>
            <person name="Zhao C."/>
            <person name="Liu Z."/>
            <person name="Zhao F."/>
            <person name="Marquardt J."/>
            <person name="Nomura C.T."/>
            <person name="Persson S."/>
            <person name="Detter J.C."/>
            <person name="Richardson P.M."/>
            <person name="Lanz C."/>
            <person name="Schuster S.C."/>
            <person name="Wang J."/>
            <person name="Li S."/>
            <person name="Huang X."/>
            <person name="Cai T."/>
            <person name="Yu Z."/>
            <person name="Luo J."/>
            <person name="Zhao J."/>
            <person name="Bryant D.A."/>
        </authorList>
    </citation>
    <scope>NUCLEOTIDE SEQUENCE [LARGE SCALE GENOMIC DNA]</scope>
    <source>
        <strain>ATCC 27264 / PCC 7002 / PR-6</strain>
    </source>
</reference>
<dbReference type="EC" id="5.3.1.23" evidence="1"/>
<dbReference type="EMBL" id="CP000951">
    <property type="protein sequence ID" value="ACB00286.1"/>
    <property type="status" value="ALT_INIT"/>
    <property type="molecule type" value="Genomic_DNA"/>
</dbReference>
<dbReference type="RefSeq" id="WP_041443958.1">
    <property type="nucleotide sequence ID" value="NZ_JAHHPU010000006.1"/>
</dbReference>
<dbReference type="SMR" id="B1XJK0"/>
<dbReference type="STRING" id="32049.SYNPCC7002_A2308"/>
<dbReference type="KEGG" id="syp:SYNPCC7002_A2308"/>
<dbReference type="eggNOG" id="COG0182">
    <property type="taxonomic scope" value="Bacteria"/>
</dbReference>
<dbReference type="HOGENOM" id="CLU_016218_1_2_3"/>
<dbReference type="UniPathway" id="UPA00904">
    <property type="reaction ID" value="UER00874"/>
</dbReference>
<dbReference type="Proteomes" id="UP000001688">
    <property type="component" value="Chromosome"/>
</dbReference>
<dbReference type="GO" id="GO:0046523">
    <property type="term" value="F:S-methyl-5-thioribose-1-phosphate isomerase activity"/>
    <property type="evidence" value="ECO:0007669"/>
    <property type="project" value="UniProtKB-UniRule"/>
</dbReference>
<dbReference type="GO" id="GO:0019509">
    <property type="term" value="P:L-methionine salvage from methylthioadenosine"/>
    <property type="evidence" value="ECO:0007669"/>
    <property type="project" value="UniProtKB-UniRule"/>
</dbReference>
<dbReference type="FunFam" id="1.20.120.420:FF:000003">
    <property type="entry name" value="Methylthioribose-1-phosphate isomerase"/>
    <property type="match status" value="1"/>
</dbReference>
<dbReference type="FunFam" id="3.40.50.10470:FF:000006">
    <property type="entry name" value="Methylthioribose-1-phosphate isomerase"/>
    <property type="match status" value="1"/>
</dbReference>
<dbReference type="Gene3D" id="1.20.120.420">
    <property type="entry name" value="translation initiation factor eif-2b, domain 1"/>
    <property type="match status" value="1"/>
</dbReference>
<dbReference type="Gene3D" id="3.40.50.10470">
    <property type="entry name" value="Translation initiation factor eif-2b, domain 2"/>
    <property type="match status" value="1"/>
</dbReference>
<dbReference type="HAMAP" id="MF_01678">
    <property type="entry name" value="Salvage_MtnA"/>
    <property type="match status" value="1"/>
</dbReference>
<dbReference type="InterPro" id="IPR000649">
    <property type="entry name" value="IF-2B-related"/>
</dbReference>
<dbReference type="InterPro" id="IPR005251">
    <property type="entry name" value="IF-M1Pi"/>
</dbReference>
<dbReference type="InterPro" id="IPR042529">
    <property type="entry name" value="IF_2B-like_C"/>
</dbReference>
<dbReference type="InterPro" id="IPR011559">
    <property type="entry name" value="Initiation_fac_2B_a/b/d"/>
</dbReference>
<dbReference type="InterPro" id="IPR027363">
    <property type="entry name" value="M1Pi_N"/>
</dbReference>
<dbReference type="InterPro" id="IPR037171">
    <property type="entry name" value="NagB/RpiA_transferase-like"/>
</dbReference>
<dbReference type="NCBIfam" id="TIGR00524">
    <property type="entry name" value="eIF-2B_rel"/>
    <property type="match status" value="1"/>
</dbReference>
<dbReference type="NCBIfam" id="NF004326">
    <property type="entry name" value="PRK05720.1"/>
    <property type="match status" value="1"/>
</dbReference>
<dbReference type="NCBIfam" id="TIGR00512">
    <property type="entry name" value="salvage_mtnA"/>
    <property type="match status" value="1"/>
</dbReference>
<dbReference type="PANTHER" id="PTHR43475">
    <property type="entry name" value="METHYLTHIORIBOSE-1-PHOSPHATE ISOMERASE"/>
    <property type="match status" value="1"/>
</dbReference>
<dbReference type="PANTHER" id="PTHR43475:SF1">
    <property type="entry name" value="METHYLTHIORIBOSE-1-PHOSPHATE ISOMERASE"/>
    <property type="match status" value="1"/>
</dbReference>
<dbReference type="Pfam" id="PF01008">
    <property type="entry name" value="IF-2B"/>
    <property type="match status" value="1"/>
</dbReference>
<dbReference type="SUPFAM" id="SSF100950">
    <property type="entry name" value="NagB/RpiA/CoA transferase-like"/>
    <property type="match status" value="1"/>
</dbReference>
<proteinExistence type="inferred from homology"/>
<organism>
    <name type="scientific">Picosynechococcus sp. (strain ATCC 27264 / PCC 7002 / PR-6)</name>
    <name type="common">Agmenellum quadruplicatum</name>
    <dbReference type="NCBI Taxonomy" id="32049"/>
    <lineage>
        <taxon>Bacteria</taxon>
        <taxon>Bacillati</taxon>
        <taxon>Cyanobacteriota</taxon>
        <taxon>Cyanophyceae</taxon>
        <taxon>Oscillatoriophycideae</taxon>
        <taxon>Chroococcales</taxon>
        <taxon>Geminocystaceae</taxon>
        <taxon>Picosynechococcus</taxon>
    </lineage>
</organism>
<name>MTNA_PICP2</name>
<accession>B1XJK0</accession>
<keyword id="KW-0028">Amino-acid biosynthesis</keyword>
<keyword id="KW-0413">Isomerase</keyword>
<keyword id="KW-0486">Methionine biosynthesis</keyword>
<keyword id="KW-1185">Reference proteome</keyword>
<protein>
    <recommendedName>
        <fullName evidence="1">Methylthioribose-1-phosphate isomerase</fullName>
        <shortName evidence="1">M1Pi</shortName>
        <shortName evidence="1">MTR-1-P isomerase</shortName>
        <ecNumber evidence="1">5.3.1.23</ecNumber>
    </recommendedName>
    <alternativeName>
        <fullName evidence="1">S-methyl-5-thioribose-1-phosphate isomerase</fullName>
    </alternativeName>
</protein>
<evidence type="ECO:0000255" key="1">
    <source>
        <dbReference type="HAMAP-Rule" id="MF_01678"/>
    </source>
</evidence>
<evidence type="ECO:0000305" key="2"/>
<comment type="function">
    <text evidence="1">Catalyzes the interconversion of methylthioribose-1-phosphate (MTR-1-P) into methylthioribulose-1-phosphate (MTRu-1-P).</text>
</comment>
<comment type="catalytic activity">
    <reaction evidence="1">
        <text>5-(methylsulfanyl)-alpha-D-ribose 1-phosphate = 5-(methylsulfanyl)-D-ribulose 1-phosphate</text>
        <dbReference type="Rhea" id="RHEA:19989"/>
        <dbReference type="ChEBI" id="CHEBI:58533"/>
        <dbReference type="ChEBI" id="CHEBI:58548"/>
        <dbReference type="EC" id="5.3.1.23"/>
    </reaction>
</comment>
<comment type="pathway">
    <text evidence="1">Amino-acid biosynthesis; L-methionine biosynthesis via salvage pathway; L-methionine from S-methyl-5-thio-alpha-D-ribose 1-phosphate: step 1/6.</text>
</comment>
<comment type="similarity">
    <text evidence="2">Belongs to the eIF-2B alpha/beta/delta subunits family. MtnA subfamily.</text>
</comment>
<comment type="sequence caution" evidence="2">
    <conflict type="erroneous initiation">
        <sequence resource="EMBL-CDS" id="ACB00286"/>
    </conflict>
</comment>
<sequence length="346" mass="37335">MSNSINPIVWQEDCVLLVDQTLLPLAYKVVEIKTYQAMAEAIRTMIVRGAPAIGVSAAYGLYLGAKEIQTTDRTIFLEKLEAIAATLRQTRPTAVNLFWAIDRVMATVQGATGNIPELQNLILNTAKAIHNEDLATCQAIGDQGLAVLPETPEKLTILTHCNAGGLATAGYGTALGVIRSAWRENRLGMVYADETRPRLQGSKLTTWECVQEGIPVTQICDNMAAHCMQQGRIDAVVVGADRITANGDAANKIGTYSLAIVAKAHNVPFFVAAPLSTVDFSLSDGKQIPIEERDPKEVYQIGDTRICPEGVQFYNPAFDVTPAHLITAIITEKGAVAPDQLIHLKG</sequence>